<comment type="function">
    <text evidence="2 3">Multifunctional GTPase involved in a variety of cellular processes including gene expression, cell migration, cell proliferation, oncogenic transformation and membrane trafficking. Accomplishes its multiple functions by interacting with distinct downstream effectors. Acts as a GTP sensor for GTP-dependent exocytosis of dense core vesicles (By similarity). Required both to stabilize the assembly of the exocyst complex and to localize functional exocyst complexes to the leading edge of migrating cells (By similarity). Required for suppression of apoptosis (By similarity). In late stages of cytokinesis, upon completion of the bridge formation between dividing cells, mediates exocyst recruitment to the midbody to drive abscission (By similarity). Involved in ligand-dependent receptor mediated endocytosis of the EGF and insulin receptors (By similarity).</text>
</comment>
<comment type="catalytic activity">
    <reaction evidence="5">
        <text>GTP + H2O = GDP + phosphate + H(+)</text>
        <dbReference type="Rhea" id="RHEA:19669"/>
        <dbReference type="ChEBI" id="CHEBI:15377"/>
        <dbReference type="ChEBI" id="CHEBI:15378"/>
        <dbReference type="ChEBI" id="CHEBI:37565"/>
        <dbReference type="ChEBI" id="CHEBI:43474"/>
        <dbReference type="ChEBI" id="CHEBI:58189"/>
        <dbReference type="EC" id="3.6.5.2"/>
    </reaction>
</comment>
<comment type="activity regulation">
    <text>Alternates between an inactive form bound to GDP and an active form bound to GTP. Activated by a guanine nucleotide-exchange factor (GEF) and inactivated by a GTPase-activating protein (GAP).</text>
</comment>
<comment type="subunit">
    <text evidence="2">Interacts with EXOC2/Sec5 and EXOC8/Exo84 (By similarity). Interacts (via effector domain) with RALBP1 (By similarity).</text>
</comment>
<comment type="subcellular location">
    <subcellularLocation>
        <location evidence="2">Cell membrane</location>
        <topology evidence="2">Lipid-anchor</topology>
        <orientation evidence="2">Cytoplasmic side</orientation>
    </subcellularLocation>
    <subcellularLocation>
        <location evidence="2">Midbody</location>
    </subcellularLocation>
    <text evidence="2">During late cytokinesis, enriched at the midbody.</text>
</comment>
<comment type="PTM">
    <text evidence="2">Prenylation is essential for membrane localization.</text>
</comment>
<comment type="PTM">
    <text evidence="2">The farnesylated form confers resistance to the proapoptotic and anti-anchorage-dependent growth effects of some geranylgeranyltransferase I inhibitors.</text>
</comment>
<comment type="similarity">
    <text evidence="5">Belongs to the small GTPase superfamily. Ras family.</text>
</comment>
<keyword id="KW-0053">Apoptosis</keyword>
<keyword id="KW-0131">Cell cycle</keyword>
<keyword id="KW-0132">Cell division</keyword>
<keyword id="KW-1003">Cell membrane</keyword>
<keyword id="KW-0342">GTP-binding</keyword>
<keyword id="KW-0378">Hydrolase</keyword>
<keyword id="KW-0449">Lipoprotein</keyword>
<keyword id="KW-0472">Membrane</keyword>
<keyword id="KW-0488">Methylation</keyword>
<keyword id="KW-0547">Nucleotide-binding</keyword>
<keyword id="KW-0636">Prenylation</keyword>
<keyword id="KW-1185">Reference proteome</keyword>
<name>RALB_MOUSE</name>
<evidence type="ECO:0000250" key="1"/>
<evidence type="ECO:0000250" key="2">
    <source>
        <dbReference type="UniProtKB" id="P11234"/>
    </source>
</evidence>
<evidence type="ECO:0000250" key="3">
    <source>
        <dbReference type="UniProtKB" id="P36860"/>
    </source>
</evidence>
<evidence type="ECO:0000256" key="4">
    <source>
        <dbReference type="SAM" id="MobiDB-lite"/>
    </source>
</evidence>
<evidence type="ECO:0000305" key="5"/>
<feature type="chain" id="PRO_0000082699" description="Ras-related protein Ral-B">
    <location>
        <begin position="1"/>
        <end position="203"/>
    </location>
</feature>
<feature type="propeptide" id="PRO_0000281351" description="Removed in mature form" evidence="1">
    <location>
        <begin position="204"/>
        <end position="206"/>
    </location>
</feature>
<feature type="region of interest" description="Disordered" evidence="4">
    <location>
        <begin position="181"/>
        <end position="206"/>
    </location>
</feature>
<feature type="short sequence motif" description="Effector region">
    <location>
        <begin position="43"/>
        <end position="51"/>
    </location>
</feature>
<feature type="binding site" evidence="1">
    <location>
        <begin position="21"/>
        <end position="29"/>
    </location>
    <ligand>
        <name>GTP</name>
        <dbReference type="ChEBI" id="CHEBI:37565"/>
    </ligand>
</feature>
<feature type="binding site" evidence="1">
    <location>
        <begin position="68"/>
        <end position="72"/>
    </location>
    <ligand>
        <name>GTP</name>
        <dbReference type="ChEBI" id="CHEBI:37565"/>
    </ligand>
</feature>
<feature type="binding site" evidence="1">
    <location>
        <begin position="128"/>
        <end position="131"/>
    </location>
    <ligand>
        <name>GTP</name>
        <dbReference type="ChEBI" id="CHEBI:37565"/>
    </ligand>
</feature>
<feature type="binding site" evidence="1">
    <location>
        <begin position="158"/>
        <end position="160"/>
    </location>
    <ligand>
        <name>GTP</name>
        <dbReference type="ChEBI" id="CHEBI:37565"/>
    </ligand>
</feature>
<feature type="modified residue" description="Cysteine methyl ester" evidence="1">
    <location>
        <position position="203"/>
    </location>
</feature>
<feature type="lipid moiety-binding region" description="S-geranylgeranyl cysteine" evidence="1">
    <location>
        <position position="203"/>
    </location>
</feature>
<gene>
    <name type="primary">Ralb</name>
</gene>
<proteinExistence type="evidence at protein level"/>
<sequence>MAANKGKSQGSLVLHKVIMVGSGGVGKSALTLQFMYDEFVEDYEPTKADSYRKKVVLDGEEVQIDILDTAGQEDYAAIRDNYFRSGEGFLLVFSITEHESFTATAEFREQILRVKSEEDKIPLLVVGNKSDLEERRQVPVDEARGKAEEWGVQYVETSAKTRANVDKVFFDLMREIRAKKMSENKDKNGRKSSKSKKSFKERCCLL</sequence>
<accession>Q9JIW9</accession>
<accession>Q3TVS5</accession>
<reference key="1">
    <citation type="journal article" date="2000" name="Mech. Dev.">
        <title>Tissue-specific expression of GTPas RalA and RalB during embryogenesis and regulation by epithelial-mesenchymal interaction.</title>
        <authorList>
            <person name="Zhao Z."/>
            <person name="Rivkees S.A."/>
        </authorList>
    </citation>
    <scope>NUCLEOTIDE SEQUENCE [MRNA]</scope>
    <source>
        <strain>C57BL/6J</strain>
    </source>
</reference>
<reference key="2">
    <citation type="journal article" date="2005" name="Science">
        <title>The transcriptional landscape of the mammalian genome.</title>
        <authorList>
            <person name="Carninci P."/>
            <person name="Kasukawa T."/>
            <person name="Katayama S."/>
            <person name="Gough J."/>
            <person name="Frith M.C."/>
            <person name="Maeda N."/>
            <person name="Oyama R."/>
            <person name="Ravasi T."/>
            <person name="Lenhard B."/>
            <person name="Wells C."/>
            <person name="Kodzius R."/>
            <person name="Shimokawa K."/>
            <person name="Bajic V.B."/>
            <person name="Brenner S.E."/>
            <person name="Batalov S."/>
            <person name="Forrest A.R."/>
            <person name="Zavolan M."/>
            <person name="Davis M.J."/>
            <person name="Wilming L.G."/>
            <person name="Aidinis V."/>
            <person name="Allen J.E."/>
            <person name="Ambesi-Impiombato A."/>
            <person name="Apweiler R."/>
            <person name="Aturaliya R.N."/>
            <person name="Bailey T.L."/>
            <person name="Bansal M."/>
            <person name="Baxter L."/>
            <person name="Beisel K.W."/>
            <person name="Bersano T."/>
            <person name="Bono H."/>
            <person name="Chalk A.M."/>
            <person name="Chiu K.P."/>
            <person name="Choudhary V."/>
            <person name="Christoffels A."/>
            <person name="Clutterbuck D.R."/>
            <person name="Crowe M.L."/>
            <person name="Dalla E."/>
            <person name="Dalrymple B.P."/>
            <person name="de Bono B."/>
            <person name="Della Gatta G."/>
            <person name="di Bernardo D."/>
            <person name="Down T."/>
            <person name="Engstrom P."/>
            <person name="Fagiolini M."/>
            <person name="Faulkner G."/>
            <person name="Fletcher C.F."/>
            <person name="Fukushima T."/>
            <person name="Furuno M."/>
            <person name="Futaki S."/>
            <person name="Gariboldi M."/>
            <person name="Georgii-Hemming P."/>
            <person name="Gingeras T.R."/>
            <person name="Gojobori T."/>
            <person name="Green R.E."/>
            <person name="Gustincich S."/>
            <person name="Harbers M."/>
            <person name="Hayashi Y."/>
            <person name="Hensch T.K."/>
            <person name="Hirokawa N."/>
            <person name="Hill D."/>
            <person name="Huminiecki L."/>
            <person name="Iacono M."/>
            <person name="Ikeo K."/>
            <person name="Iwama A."/>
            <person name="Ishikawa T."/>
            <person name="Jakt M."/>
            <person name="Kanapin A."/>
            <person name="Katoh M."/>
            <person name="Kawasawa Y."/>
            <person name="Kelso J."/>
            <person name="Kitamura H."/>
            <person name="Kitano H."/>
            <person name="Kollias G."/>
            <person name="Krishnan S.P."/>
            <person name="Kruger A."/>
            <person name="Kummerfeld S.K."/>
            <person name="Kurochkin I.V."/>
            <person name="Lareau L.F."/>
            <person name="Lazarevic D."/>
            <person name="Lipovich L."/>
            <person name="Liu J."/>
            <person name="Liuni S."/>
            <person name="McWilliam S."/>
            <person name="Madan Babu M."/>
            <person name="Madera M."/>
            <person name="Marchionni L."/>
            <person name="Matsuda H."/>
            <person name="Matsuzawa S."/>
            <person name="Miki H."/>
            <person name="Mignone F."/>
            <person name="Miyake S."/>
            <person name="Morris K."/>
            <person name="Mottagui-Tabar S."/>
            <person name="Mulder N."/>
            <person name="Nakano N."/>
            <person name="Nakauchi H."/>
            <person name="Ng P."/>
            <person name="Nilsson R."/>
            <person name="Nishiguchi S."/>
            <person name="Nishikawa S."/>
            <person name="Nori F."/>
            <person name="Ohara O."/>
            <person name="Okazaki Y."/>
            <person name="Orlando V."/>
            <person name="Pang K.C."/>
            <person name="Pavan W.J."/>
            <person name="Pavesi G."/>
            <person name="Pesole G."/>
            <person name="Petrovsky N."/>
            <person name="Piazza S."/>
            <person name="Reed J."/>
            <person name="Reid J.F."/>
            <person name="Ring B.Z."/>
            <person name="Ringwald M."/>
            <person name="Rost B."/>
            <person name="Ruan Y."/>
            <person name="Salzberg S.L."/>
            <person name="Sandelin A."/>
            <person name="Schneider C."/>
            <person name="Schoenbach C."/>
            <person name="Sekiguchi K."/>
            <person name="Semple C.A."/>
            <person name="Seno S."/>
            <person name="Sessa L."/>
            <person name="Sheng Y."/>
            <person name="Shibata Y."/>
            <person name="Shimada H."/>
            <person name="Shimada K."/>
            <person name="Silva D."/>
            <person name="Sinclair B."/>
            <person name="Sperling S."/>
            <person name="Stupka E."/>
            <person name="Sugiura K."/>
            <person name="Sultana R."/>
            <person name="Takenaka Y."/>
            <person name="Taki K."/>
            <person name="Tammoja K."/>
            <person name="Tan S.L."/>
            <person name="Tang S."/>
            <person name="Taylor M.S."/>
            <person name="Tegner J."/>
            <person name="Teichmann S.A."/>
            <person name="Ueda H.R."/>
            <person name="van Nimwegen E."/>
            <person name="Verardo R."/>
            <person name="Wei C.L."/>
            <person name="Yagi K."/>
            <person name="Yamanishi H."/>
            <person name="Zabarovsky E."/>
            <person name="Zhu S."/>
            <person name="Zimmer A."/>
            <person name="Hide W."/>
            <person name="Bult C."/>
            <person name="Grimmond S.M."/>
            <person name="Teasdale R.D."/>
            <person name="Liu E.T."/>
            <person name="Brusic V."/>
            <person name="Quackenbush J."/>
            <person name="Wahlestedt C."/>
            <person name="Mattick J.S."/>
            <person name="Hume D.A."/>
            <person name="Kai C."/>
            <person name="Sasaki D."/>
            <person name="Tomaru Y."/>
            <person name="Fukuda S."/>
            <person name="Kanamori-Katayama M."/>
            <person name="Suzuki M."/>
            <person name="Aoki J."/>
            <person name="Arakawa T."/>
            <person name="Iida J."/>
            <person name="Imamura K."/>
            <person name="Itoh M."/>
            <person name="Kato T."/>
            <person name="Kawaji H."/>
            <person name="Kawagashira N."/>
            <person name="Kawashima T."/>
            <person name="Kojima M."/>
            <person name="Kondo S."/>
            <person name="Konno H."/>
            <person name="Nakano K."/>
            <person name="Ninomiya N."/>
            <person name="Nishio T."/>
            <person name="Okada M."/>
            <person name="Plessy C."/>
            <person name="Shibata K."/>
            <person name="Shiraki T."/>
            <person name="Suzuki S."/>
            <person name="Tagami M."/>
            <person name="Waki K."/>
            <person name="Watahiki A."/>
            <person name="Okamura-Oho Y."/>
            <person name="Suzuki H."/>
            <person name="Kawai J."/>
            <person name="Hayashizaki Y."/>
        </authorList>
    </citation>
    <scope>NUCLEOTIDE SEQUENCE [LARGE SCALE MRNA]</scope>
    <source>
        <strain>C57BL/6J</strain>
        <tissue>Embryo</tissue>
    </source>
</reference>
<reference key="3">
    <citation type="journal article" date="2004" name="Genome Res.">
        <title>The status, quality, and expansion of the NIH full-length cDNA project: the Mammalian Gene Collection (MGC).</title>
        <authorList>
            <consortium name="The MGC Project Team"/>
        </authorList>
    </citation>
    <scope>NUCLEOTIDE SEQUENCE [LARGE SCALE MRNA]</scope>
</reference>
<reference key="4">
    <citation type="journal article" date="2010" name="Cell">
        <title>A tissue-specific atlas of mouse protein phosphorylation and expression.</title>
        <authorList>
            <person name="Huttlin E.L."/>
            <person name="Jedrychowski M.P."/>
            <person name="Elias J.E."/>
            <person name="Goswami T."/>
            <person name="Rad R."/>
            <person name="Beausoleil S.A."/>
            <person name="Villen J."/>
            <person name="Haas W."/>
            <person name="Sowa M.E."/>
            <person name="Gygi S.P."/>
        </authorList>
    </citation>
    <scope>IDENTIFICATION BY MASS SPECTROMETRY [LARGE SCALE ANALYSIS]</scope>
    <source>
        <tissue>Brain</tissue>
        <tissue>Brown adipose tissue</tissue>
        <tissue>Heart</tissue>
        <tissue>Kidney</tissue>
        <tissue>Liver</tissue>
        <tissue>Lung</tissue>
        <tissue>Pancreas</tissue>
        <tissue>Testis</tissue>
    </source>
</reference>
<dbReference type="EC" id="3.6.5.2" evidence="5"/>
<dbReference type="EMBL" id="AF174296">
    <property type="protein sequence ID" value="AAF89875.1"/>
    <property type="molecule type" value="mRNA"/>
</dbReference>
<dbReference type="EMBL" id="AK017698">
    <property type="protein sequence ID" value="BAB30881.1"/>
    <property type="molecule type" value="mRNA"/>
</dbReference>
<dbReference type="EMBL" id="AK159993">
    <property type="protein sequence ID" value="BAE35543.1"/>
    <property type="molecule type" value="mRNA"/>
</dbReference>
<dbReference type="EMBL" id="BC006907">
    <property type="protein sequence ID" value="AAH06907.1"/>
    <property type="molecule type" value="mRNA"/>
</dbReference>
<dbReference type="CCDS" id="CCDS15225.1"/>
<dbReference type="RefSeq" id="NP_071722.1">
    <property type="nucleotide sequence ID" value="NM_022327.5"/>
</dbReference>
<dbReference type="RefSeq" id="XP_006529845.1">
    <property type="nucleotide sequence ID" value="XM_006529782.3"/>
</dbReference>
<dbReference type="RefSeq" id="XP_036008626.1">
    <property type="nucleotide sequence ID" value="XM_036152733.1"/>
</dbReference>
<dbReference type="SMR" id="Q9JIW9"/>
<dbReference type="BioGRID" id="211033">
    <property type="interactions" value="4"/>
</dbReference>
<dbReference type="FunCoup" id="Q9JIW9">
    <property type="interactions" value="1851"/>
</dbReference>
<dbReference type="IntAct" id="Q9JIW9">
    <property type="interactions" value="3"/>
</dbReference>
<dbReference type="STRING" id="10090.ENSMUSP00000004565"/>
<dbReference type="iPTMnet" id="Q9JIW9"/>
<dbReference type="PhosphoSitePlus" id="Q9JIW9"/>
<dbReference type="SwissPalm" id="Q9JIW9"/>
<dbReference type="jPOST" id="Q9JIW9"/>
<dbReference type="PaxDb" id="10090-ENSMUSP00000004565"/>
<dbReference type="PeptideAtlas" id="Q9JIW9"/>
<dbReference type="ProteomicsDB" id="300348"/>
<dbReference type="Pumba" id="Q9JIW9"/>
<dbReference type="Antibodypedia" id="33389">
    <property type="antibodies" value="374 antibodies from 36 providers"/>
</dbReference>
<dbReference type="DNASU" id="64143"/>
<dbReference type="Ensembl" id="ENSMUST00000004565.15">
    <property type="protein sequence ID" value="ENSMUSP00000004565.9"/>
    <property type="gene ID" value="ENSMUSG00000004451.15"/>
</dbReference>
<dbReference type="GeneID" id="64143"/>
<dbReference type="KEGG" id="mmu:64143"/>
<dbReference type="UCSC" id="uc007cis.2">
    <property type="organism name" value="mouse"/>
</dbReference>
<dbReference type="AGR" id="MGI:1927244"/>
<dbReference type="CTD" id="5899"/>
<dbReference type="MGI" id="MGI:1927244">
    <property type="gene designation" value="Ralb"/>
</dbReference>
<dbReference type="VEuPathDB" id="HostDB:ENSMUSG00000004451"/>
<dbReference type="eggNOG" id="KOG0395">
    <property type="taxonomic scope" value="Eukaryota"/>
</dbReference>
<dbReference type="GeneTree" id="ENSGT00940000155984"/>
<dbReference type="HOGENOM" id="CLU_041217_9_8_1"/>
<dbReference type="InParanoid" id="Q9JIW9"/>
<dbReference type="OMA" id="DDTIPFI"/>
<dbReference type="OrthoDB" id="5976022at2759"/>
<dbReference type="PhylomeDB" id="Q9JIW9"/>
<dbReference type="TreeFam" id="TF312796"/>
<dbReference type="BioGRID-ORCS" id="64143">
    <property type="hits" value="2 hits in 78 CRISPR screens"/>
</dbReference>
<dbReference type="ChiTaRS" id="Ralb">
    <property type="organism name" value="mouse"/>
</dbReference>
<dbReference type="PRO" id="PR:Q9JIW9"/>
<dbReference type="Proteomes" id="UP000000589">
    <property type="component" value="Chromosome 1"/>
</dbReference>
<dbReference type="RNAct" id="Q9JIW9">
    <property type="molecule type" value="protein"/>
</dbReference>
<dbReference type="Bgee" id="ENSMUSG00000004451">
    <property type="expression patterns" value="Expressed in granulocyte and 260 other cell types or tissues"/>
</dbReference>
<dbReference type="ExpressionAtlas" id="Q9JIW9">
    <property type="expression patterns" value="baseline and differential"/>
</dbReference>
<dbReference type="GO" id="GO:0030496">
    <property type="term" value="C:midbody"/>
    <property type="evidence" value="ECO:0000250"/>
    <property type="project" value="UniProtKB"/>
</dbReference>
<dbReference type="GO" id="GO:0005886">
    <property type="term" value="C:plasma membrane"/>
    <property type="evidence" value="ECO:0000250"/>
    <property type="project" value="UniProtKB"/>
</dbReference>
<dbReference type="GO" id="GO:0051117">
    <property type="term" value="F:ATPase binding"/>
    <property type="evidence" value="ECO:0007669"/>
    <property type="project" value="Ensembl"/>
</dbReference>
<dbReference type="GO" id="GO:0003925">
    <property type="term" value="F:G protein activity"/>
    <property type="evidence" value="ECO:0007669"/>
    <property type="project" value="UniProtKB-EC"/>
</dbReference>
<dbReference type="GO" id="GO:0019003">
    <property type="term" value="F:GDP binding"/>
    <property type="evidence" value="ECO:0007669"/>
    <property type="project" value="Ensembl"/>
</dbReference>
<dbReference type="GO" id="GO:0005525">
    <property type="term" value="F:GTP binding"/>
    <property type="evidence" value="ECO:0000250"/>
    <property type="project" value="UniProtKB"/>
</dbReference>
<dbReference type="GO" id="GO:0003924">
    <property type="term" value="F:GTPase activity"/>
    <property type="evidence" value="ECO:0000250"/>
    <property type="project" value="UniProtKB"/>
</dbReference>
<dbReference type="GO" id="GO:0031625">
    <property type="term" value="F:ubiquitin protein ligase binding"/>
    <property type="evidence" value="ECO:0007669"/>
    <property type="project" value="Ensembl"/>
</dbReference>
<dbReference type="GO" id="GO:0006915">
    <property type="term" value="P:apoptotic process"/>
    <property type="evidence" value="ECO:0007669"/>
    <property type="project" value="UniProtKB-KW"/>
</dbReference>
<dbReference type="GO" id="GO:0051301">
    <property type="term" value="P:cell division"/>
    <property type="evidence" value="ECO:0007669"/>
    <property type="project" value="UniProtKB-KW"/>
</dbReference>
<dbReference type="GO" id="GO:0071360">
    <property type="term" value="P:cellular response to exogenous dsRNA"/>
    <property type="evidence" value="ECO:0007669"/>
    <property type="project" value="Ensembl"/>
</dbReference>
<dbReference type="GO" id="GO:0009267">
    <property type="term" value="P:cellular response to starvation"/>
    <property type="evidence" value="ECO:0007669"/>
    <property type="project" value="Ensembl"/>
</dbReference>
<dbReference type="GO" id="GO:2000786">
    <property type="term" value="P:positive regulation of autophagosome assembly"/>
    <property type="evidence" value="ECO:0007669"/>
    <property type="project" value="Ensembl"/>
</dbReference>
<dbReference type="GO" id="GO:0045742">
    <property type="term" value="P:positive regulation of epidermal growth factor receptor signaling pathway"/>
    <property type="evidence" value="ECO:0007669"/>
    <property type="project" value="Ensembl"/>
</dbReference>
<dbReference type="GO" id="GO:0031623">
    <property type="term" value="P:receptor internalization"/>
    <property type="evidence" value="ECO:0007669"/>
    <property type="project" value="Ensembl"/>
</dbReference>
<dbReference type="GO" id="GO:0001928">
    <property type="term" value="P:regulation of exocyst assembly"/>
    <property type="evidence" value="ECO:0000250"/>
    <property type="project" value="UniProtKB"/>
</dbReference>
<dbReference type="GO" id="GO:0060178">
    <property type="term" value="P:regulation of exocyst localization"/>
    <property type="evidence" value="ECO:0000250"/>
    <property type="project" value="UniProtKB"/>
</dbReference>
<dbReference type="GO" id="GO:0007165">
    <property type="term" value="P:signal transduction"/>
    <property type="evidence" value="ECO:0007669"/>
    <property type="project" value="InterPro"/>
</dbReference>
<dbReference type="CDD" id="cd04139">
    <property type="entry name" value="RalA_RalB"/>
    <property type="match status" value="1"/>
</dbReference>
<dbReference type="FunFam" id="3.40.50.300:FF:000203">
    <property type="entry name" value="Putative ras-related protein ral-a"/>
    <property type="match status" value="1"/>
</dbReference>
<dbReference type="Gene3D" id="3.40.50.300">
    <property type="entry name" value="P-loop containing nucleotide triphosphate hydrolases"/>
    <property type="match status" value="1"/>
</dbReference>
<dbReference type="InterPro" id="IPR027417">
    <property type="entry name" value="P-loop_NTPase"/>
</dbReference>
<dbReference type="InterPro" id="IPR005225">
    <property type="entry name" value="Small_GTP-bd"/>
</dbReference>
<dbReference type="InterPro" id="IPR001806">
    <property type="entry name" value="Small_GTPase"/>
</dbReference>
<dbReference type="InterPro" id="IPR020849">
    <property type="entry name" value="Small_GTPase_Ras-type"/>
</dbReference>
<dbReference type="NCBIfam" id="TIGR00231">
    <property type="entry name" value="small_GTP"/>
    <property type="match status" value="1"/>
</dbReference>
<dbReference type="PANTHER" id="PTHR24070">
    <property type="entry name" value="RAS, DI-RAS, AND RHEB FAMILY MEMBERS OF SMALL GTPASE SUPERFAMILY"/>
    <property type="match status" value="1"/>
</dbReference>
<dbReference type="Pfam" id="PF00071">
    <property type="entry name" value="Ras"/>
    <property type="match status" value="1"/>
</dbReference>
<dbReference type="PRINTS" id="PR00449">
    <property type="entry name" value="RASTRNSFRMNG"/>
</dbReference>
<dbReference type="SMART" id="SM00175">
    <property type="entry name" value="RAB"/>
    <property type="match status" value="1"/>
</dbReference>
<dbReference type="SMART" id="SM00176">
    <property type="entry name" value="RAN"/>
    <property type="match status" value="1"/>
</dbReference>
<dbReference type="SMART" id="SM00173">
    <property type="entry name" value="RAS"/>
    <property type="match status" value="1"/>
</dbReference>
<dbReference type="SMART" id="SM00174">
    <property type="entry name" value="RHO"/>
    <property type="match status" value="1"/>
</dbReference>
<dbReference type="SUPFAM" id="SSF52540">
    <property type="entry name" value="P-loop containing nucleoside triphosphate hydrolases"/>
    <property type="match status" value="1"/>
</dbReference>
<dbReference type="PROSITE" id="PS51421">
    <property type="entry name" value="RAS"/>
    <property type="match status" value="1"/>
</dbReference>
<organism>
    <name type="scientific">Mus musculus</name>
    <name type="common">Mouse</name>
    <dbReference type="NCBI Taxonomy" id="10090"/>
    <lineage>
        <taxon>Eukaryota</taxon>
        <taxon>Metazoa</taxon>
        <taxon>Chordata</taxon>
        <taxon>Craniata</taxon>
        <taxon>Vertebrata</taxon>
        <taxon>Euteleostomi</taxon>
        <taxon>Mammalia</taxon>
        <taxon>Eutheria</taxon>
        <taxon>Euarchontoglires</taxon>
        <taxon>Glires</taxon>
        <taxon>Rodentia</taxon>
        <taxon>Myomorpha</taxon>
        <taxon>Muroidea</taxon>
        <taxon>Muridae</taxon>
        <taxon>Murinae</taxon>
        <taxon>Mus</taxon>
        <taxon>Mus</taxon>
    </lineage>
</organism>
<protein>
    <recommendedName>
        <fullName>Ras-related protein Ral-B</fullName>
        <ecNumber evidence="5">3.6.5.2</ecNumber>
    </recommendedName>
</protein>